<name>AT1A_ARTSF</name>
<feature type="chain" id="PRO_0000046306" description="Sodium/potassium-transporting ATPase subunit alpha-A">
    <location>
        <begin position="1"/>
        <end position="996"/>
    </location>
</feature>
<feature type="transmembrane region" description="Helical" evidence="1">
    <location>
        <begin position="73"/>
        <end position="93"/>
    </location>
</feature>
<feature type="transmembrane region" description="Helical" evidence="1">
    <location>
        <begin position="107"/>
        <end position="123"/>
    </location>
</feature>
<feature type="transmembrane region" description="Helical" evidence="1">
    <location>
        <begin position="268"/>
        <end position="290"/>
    </location>
</feature>
<feature type="transmembrane region" description="Helical" evidence="1">
    <location>
        <begin position="297"/>
        <end position="325"/>
    </location>
</feature>
<feature type="transmembrane region" description="Helical" evidence="1">
    <location>
        <begin position="762"/>
        <end position="785"/>
    </location>
</feature>
<feature type="transmembrane region" description="Helical" evidence="1">
    <location>
        <begin position="820"/>
        <end position="847"/>
    </location>
</feature>
<feature type="transmembrane region" description="Helical" evidence="1">
    <location>
        <begin position="889"/>
        <end position="909"/>
    </location>
</feature>
<feature type="transmembrane region" description="Helical" evidence="1">
    <location>
        <begin position="926"/>
        <end position="951"/>
    </location>
</feature>
<feature type="region of interest" description="Disordered" evidence="2">
    <location>
        <begin position="191"/>
        <end position="211"/>
    </location>
</feature>
<feature type="active site" description="4-aspartylphosphate intermediate" evidence="3">
    <location>
        <position position="353"/>
    </location>
</feature>
<feature type="binding site" evidence="1">
    <location>
        <position position="483"/>
    </location>
    <ligand>
        <name>ATP</name>
        <dbReference type="ChEBI" id="CHEBI:30616"/>
    </ligand>
</feature>
<feature type="binding site" evidence="1">
    <location>
        <position position="692"/>
    </location>
    <ligand>
        <name>Mg(2+)</name>
        <dbReference type="ChEBI" id="CHEBI:18420"/>
    </ligand>
</feature>
<feature type="binding site" evidence="1">
    <location>
        <position position="696"/>
    </location>
    <ligand>
        <name>Mg(2+)</name>
        <dbReference type="ChEBI" id="CHEBI:18420"/>
    </ligand>
</feature>
<feature type="turn" evidence="4">
    <location>
        <begin position="20"/>
        <end position="22"/>
    </location>
</feature>
<feature type="helix" evidence="4">
    <location>
        <begin position="25"/>
        <end position="32"/>
    </location>
</feature>
<feature type="turn" evidence="4">
    <location>
        <begin position="36"/>
        <end position="38"/>
    </location>
</feature>
<feature type="helix" evidence="4">
    <location>
        <begin position="42"/>
        <end position="51"/>
    </location>
</feature>
<feature type="helix" evidence="4">
    <location>
        <begin position="65"/>
        <end position="72"/>
    </location>
</feature>
<feature type="helix" evidence="4">
    <location>
        <begin position="79"/>
        <end position="98"/>
    </location>
</feature>
<feature type="helix" evidence="4">
    <location>
        <begin position="106"/>
        <end position="127"/>
    </location>
</feature>
<feature type="helix" evidence="4">
    <location>
        <begin position="134"/>
        <end position="137"/>
    </location>
</feature>
<feature type="helix" evidence="4">
    <location>
        <begin position="150"/>
        <end position="152"/>
    </location>
</feature>
<feature type="strand" evidence="4">
    <location>
        <begin position="167"/>
        <end position="169"/>
    </location>
</feature>
<feature type="strand" evidence="4">
    <location>
        <begin position="172"/>
        <end position="174"/>
    </location>
</feature>
<feature type="strand" evidence="4">
    <location>
        <begin position="178"/>
        <end position="184"/>
    </location>
</feature>
<feature type="turn" evidence="4">
    <location>
        <begin position="193"/>
        <end position="195"/>
    </location>
</feature>
<feature type="strand" evidence="4">
    <location>
        <begin position="210"/>
        <end position="212"/>
    </location>
</feature>
<feature type="helix" evidence="4">
    <location>
        <begin position="213"/>
        <end position="215"/>
    </location>
</feature>
<feature type="strand" evidence="4">
    <location>
        <begin position="232"/>
        <end position="237"/>
    </location>
</feature>
<feature type="strand" evidence="4">
    <location>
        <begin position="239"/>
        <end position="242"/>
    </location>
</feature>
<feature type="helix" evidence="4">
    <location>
        <begin position="243"/>
        <end position="252"/>
    </location>
</feature>
<feature type="helix" evidence="4">
    <location>
        <begin position="260"/>
        <end position="283"/>
    </location>
</feature>
<feature type="helix" evidence="4">
    <location>
        <begin position="285"/>
        <end position="288"/>
    </location>
</feature>
<feature type="turn" evidence="4">
    <location>
        <begin position="289"/>
        <end position="291"/>
    </location>
</feature>
<feature type="helix" evidence="4">
    <location>
        <begin position="294"/>
        <end position="304"/>
    </location>
</feature>
<feature type="strand" evidence="4">
    <location>
        <begin position="307"/>
        <end position="309"/>
    </location>
</feature>
<feature type="helix" evidence="4">
    <location>
        <begin position="314"/>
        <end position="329"/>
    </location>
</feature>
<feature type="turn" evidence="4">
    <location>
        <begin position="330"/>
        <end position="332"/>
    </location>
</feature>
<feature type="strand" evidence="4">
    <location>
        <begin position="333"/>
        <end position="337"/>
    </location>
</feature>
<feature type="helix" evidence="4">
    <location>
        <begin position="338"/>
        <end position="340"/>
    </location>
</feature>
<feature type="helix" evidence="4">
    <location>
        <begin position="342"/>
        <end position="344"/>
    </location>
</feature>
<feature type="strand" evidence="4">
    <location>
        <begin position="349"/>
        <end position="352"/>
    </location>
</feature>
<feature type="turn" evidence="4">
    <location>
        <begin position="356"/>
        <end position="358"/>
    </location>
</feature>
<feature type="strand" evidence="4">
    <location>
        <begin position="367"/>
        <end position="370"/>
    </location>
</feature>
<feature type="strand" evidence="4">
    <location>
        <begin position="373"/>
        <end position="376"/>
    </location>
</feature>
<feature type="helix" evidence="4">
    <location>
        <begin position="395"/>
        <end position="404"/>
    </location>
</feature>
<feature type="turn" evidence="4">
    <location>
        <begin position="413"/>
        <end position="416"/>
    </location>
</feature>
<feature type="turn" evidence="4">
    <location>
        <begin position="419"/>
        <end position="421"/>
    </location>
</feature>
<feature type="strand" evidence="4">
    <location>
        <begin position="424"/>
        <end position="426"/>
    </location>
</feature>
<feature type="helix" evidence="4">
    <location>
        <begin position="428"/>
        <end position="441"/>
    </location>
</feature>
<feature type="helix" evidence="4">
    <location>
        <begin position="445"/>
        <end position="450"/>
    </location>
</feature>
<feature type="strand" evidence="4">
    <location>
        <begin position="453"/>
        <end position="456"/>
    </location>
</feature>
<feature type="strand" evidence="4">
    <location>
        <begin position="461"/>
        <end position="463"/>
    </location>
</feature>
<feature type="strand" evidence="4">
    <location>
        <begin position="466"/>
        <end position="471"/>
    </location>
</feature>
<feature type="strand" evidence="4">
    <location>
        <begin position="475"/>
        <end position="484"/>
    </location>
</feature>
<feature type="helix" evidence="4">
    <location>
        <begin position="486"/>
        <end position="490"/>
    </location>
</feature>
<feature type="strand" evidence="4">
    <location>
        <begin position="493"/>
        <end position="498"/>
    </location>
</feature>
<feature type="strand" evidence="4">
    <location>
        <begin position="501"/>
        <end position="504"/>
    </location>
</feature>
<feature type="helix" evidence="4">
    <location>
        <begin position="507"/>
        <end position="522"/>
    </location>
</feature>
<feature type="strand" evidence="4">
    <location>
        <begin position="526"/>
        <end position="535"/>
    </location>
</feature>
<feature type="turn" evidence="4">
    <location>
        <begin position="537"/>
        <end position="539"/>
    </location>
</feature>
<feature type="strand" evidence="4">
    <location>
        <begin position="548"/>
        <end position="550"/>
    </location>
</feature>
<feature type="strand" evidence="4">
    <location>
        <begin position="556"/>
        <end position="567"/>
    </location>
</feature>
<feature type="helix" evidence="4">
    <location>
        <begin position="574"/>
        <end position="583"/>
    </location>
</feature>
<feature type="strand" evidence="4">
    <location>
        <begin position="587"/>
        <end position="591"/>
    </location>
</feature>
<feature type="helix" evidence="4">
    <location>
        <begin position="596"/>
        <end position="606"/>
    </location>
</feature>
<feature type="helix" evidence="4">
    <location>
        <begin position="616"/>
        <end position="623"/>
    </location>
</feature>
<feature type="turn" evidence="4">
    <location>
        <begin position="627"/>
        <end position="629"/>
    </location>
</feature>
<feature type="turn" evidence="4">
    <location>
        <begin position="632"/>
        <end position="634"/>
    </location>
</feature>
<feature type="helix" evidence="4">
    <location>
        <begin position="642"/>
        <end position="646"/>
    </location>
</feature>
<feature type="helix" evidence="4">
    <location>
        <begin position="650"/>
        <end position="659"/>
    </location>
</feature>
<feature type="strand" evidence="4">
    <location>
        <begin position="661"/>
        <end position="667"/>
    </location>
</feature>
<feature type="helix" evidence="4">
    <location>
        <begin position="670"/>
        <end position="681"/>
    </location>
</feature>
<feature type="turn" evidence="4">
    <location>
        <begin position="682"/>
        <end position="684"/>
    </location>
</feature>
<feature type="strand" evidence="4">
    <location>
        <begin position="687"/>
        <end position="690"/>
    </location>
</feature>
<feature type="helix" evidence="4">
    <location>
        <begin position="697"/>
        <end position="702"/>
    </location>
</feature>
<feature type="strand" evidence="4">
    <location>
        <begin position="703"/>
        <end position="713"/>
    </location>
</feature>
<feature type="helix" evidence="4">
    <location>
        <begin position="715"/>
        <end position="719"/>
    </location>
</feature>
<feature type="strand" evidence="4">
    <location>
        <begin position="722"/>
        <end position="725"/>
    </location>
</feature>
<feature type="helix" evidence="4">
    <location>
        <begin position="732"/>
        <end position="754"/>
    </location>
</feature>
<feature type="helix" evidence="4">
    <location>
        <begin position="758"/>
        <end position="769"/>
    </location>
</feature>
<feature type="helix" evidence="4">
    <location>
        <begin position="779"/>
        <end position="786"/>
    </location>
</feature>
<feature type="helix" evidence="4">
    <location>
        <begin position="789"/>
        <end position="791"/>
    </location>
</feature>
<feature type="helix" evidence="4">
    <location>
        <begin position="792"/>
        <end position="796"/>
    </location>
</feature>
<feature type="helix" evidence="4">
    <location>
        <begin position="797"/>
        <end position="799"/>
    </location>
</feature>
<feature type="strand" evidence="4">
    <location>
        <begin position="806"/>
        <end position="808"/>
    </location>
</feature>
<feature type="turn" evidence="4">
    <location>
        <begin position="809"/>
        <end position="812"/>
    </location>
</feature>
<feature type="helix" evidence="4">
    <location>
        <begin position="820"/>
        <end position="826"/>
    </location>
</feature>
<feature type="helix" evidence="4">
    <location>
        <begin position="829"/>
        <end position="849"/>
    </location>
</feature>
<feature type="helix" evidence="4">
    <location>
        <begin position="853"/>
        <end position="856"/>
    </location>
</feature>
<feature type="helix" evidence="4">
    <location>
        <begin position="860"/>
        <end position="864"/>
    </location>
</feature>
<feature type="helix" evidence="4">
    <location>
        <begin position="881"/>
        <end position="911"/>
    </location>
</feature>
<feature type="strand" evidence="4">
    <location>
        <begin position="913"/>
        <end position="915"/>
    </location>
</feature>
<feature type="helix" evidence="4">
    <location>
        <begin position="917"/>
        <end position="920"/>
    </location>
</feature>
<feature type="helix" evidence="4">
    <location>
        <begin position="925"/>
        <end position="941"/>
    </location>
</feature>
<feature type="turn" evidence="4">
    <location>
        <begin position="945"/>
        <end position="948"/>
    </location>
</feature>
<feature type="strand" evidence="4">
    <location>
        <begin position="949"/>
        <end position="951"/>
    </location>
</feature>
<feature type="strand" evidence="4">
    <location>
        <begin position="960"/>
        <end position="962"/>
    </location>
</feature>
<feature type="helix" evidence="4">
    <location>
        <begin position="965"/>
        <end position="983"/>
    </location>
</feature>
<feature type="helix" evidence="4">
    <location>
        <begin position="989"/>
        <end position="992"/>
    </location>
</feature>
<evidence type="ECO:0000250" key="1"/>
<evidence type="ECO:0000256" key="2">
    <source>
        <dbReference type="SAM" id="MobiDB-lite"/>
    </source>
</evidence>
<evidence type="ECO:0000305" key="3"/>
<evidence type="ECO:0007829" key="4">
    <source>
        <dbReference type="PDB" id="8K1L"/>
    </source>
</evidence>
<reference key="1">
    <citation type="journal article" date="1989" name="FEBS Lett.">
        <title>Molecular cloning of the Na,K-ATPase alpha-subunit in developing brine shrimp and sequence comparison with higher organisms.</title>
        <authorList>
            <person name="Baxter-Lowe L.A."/>
            <person name="Guo J.Z."/>
            <person name="Bergstroem E.E."/>
            <person name="Hokin L.E."/>
        </authorList>
    </citation>
    <scope>NUCLEOTIDE SEQUENCE [MRNA]</scope>
</reference>
<keyword id="KW-0002">3D-structure</keyword>
<keyword id="KW-0067">ATP-binding</keyword>
<keyword id="KW-1003">Cell membrane</keyword>
<keyword id="KW-0406">Ion transport</keyword>
<keyword id="KW-0460">Magnesium</keyword>
<keyword id="KW-0472">Membrane</keyword>
<keyword id="KW-0479">Metal-binding</keyword>
<keyword id="KW-0547">Nucleotide-binding</keyword>
<keyword id="KW-0597">Phosphoprotein</keyword>
<keyword id="KW-0630">Potassium</keyword>
<keyword id="KW-0633">Potassium transport</keyword>
<keyword id="KW-0915">Sodium</keyword>
<keyword id="KW-0739">Sodium transport</keyword>
<keyword id="KW-0740">Sodium/potassium transport</keyword>
<keyword id="KW-1278">Translocase</keyword>
<keyword id="KW-0812">Transmembrane</keyword>
<keyword id="KW-1133">Transmembrane helix</keyword>
<keyword id="KW-0813">Transport</keyword>
<sequence>MGKKQGKQLSDLKKELELDQHKIPLEELCRRLGTNTETGLTSSQAKSHLEKYGPNALTPPRTTPEWIKFCKQLFGGFQMLLWIGSILCFIAYTMEKYKNPDVLGDNLYLGLALLFVVIMTGCFAYYQDHNASKIMDSFKNLMPQFAFVIRDGKKIQLKAEEVTVGDLVEVKFGDRIPADIRITSCQSMKVDNSSLTGESEPQSRSTECTNDNPLETKNLAFFFTNTLEGTGRGIVINVGDDSVMGRIACLASSLDSGKTPIAREIEHFIHIITAMAVSLAAVFAVISFLYGYTWLEAAIFMIGIIVAKVPEGLLATVTVCLTLTAKRMAKKNCLVRNLEAVETLGSTSTICSDKTGTLTQNRMTVAHMWFDQKIVTADTTENQSGNQLYRGSKGFPELIRVASLCSRAEFKTEHAHLPVLKRDVNGDASEAAILKFAEMSTGSVMNIRSKQKKVSEIPFNSANKYQVSVHEREDKSGYFLVMKGAPERILERCSTILIDGTEIPLDNHMKECFNNAYMELGGMGERVLGFCDFELPSDQYPRGYVFDADEPNFPISGLRFVGLMSMIDPPRAAVPDAVSKCRSAGIKVIMVTGDHPITAKAIARQVGIISEGHETVDDIAARLNIPVSEVNPRSAQAAVIHGNDLKDMNSDQLDDILRHYREIVFARTSPQQKLIIVEGVQRQGEFVAVTGDGVNDSPALKKADIGVAMGIAGSDVSKQAADMILLDDNFASIVTGVEEGRLIFDNIKKSIAYTLTSKIPELSPFLMYILFDLPLAIGTVTILCIDLGTDVVPAISMAYEGPEADPRKPRDPVKEKLVNERLISMAYGQIGVMQAFGGFFTYFVIMGECGFLPNRLFGLRKWWESKAYNDLTDSYGQEWTWDARKQLEYTCHTAFFISIVIVQWTDLIICKTRRLSLFQQGMKNGTLNFALVFETCVAAFLSYTPGMDKGLRMYPLKIWWWFPPMPFSLLILVYDECRKFLMRRNPGGFLERETYY</sequence>
<accession>P17326</accession>
<proteinExistence type="evidence at protein level"/>
<comment type="function">
    <text>This is the catalytic component of the active enzyme, which catalyzes the hydrolysis of ATP coupled with the exchange of sodium and potassium ions across the plasma membrane. This action creates the electrochemical gradient of sodium and potassium ions, providing the energy for active transport of various nutrients.</text>
</comment>
<comment type="catalytic activity">
    <reaction>
        <text>K(+)(out) + Na(+)(in) + ATP + H2O = K(+)(in) + Na(+)(out) + ADP + phosphate + H(+)</text>
        <dbReference type="Rhea" id="RHEA:18353"/>
        <dbReference type="ChEBI" id="CHEBI:15377"/>
        <dbReference type="ChEBI" id="CHEBI:15378"/>
        <dbReference type="ChEBI" id="CHEBI:29101"/>
        <dbReference type="ChEBI" id="CHEBI:29103"/>
        <dbReference type="ChEBI" id="CHEBI:30616"/>
        <dbReference type="ChEBI" id="CHEBI:43474"/>
        <dbReference type="ChEBI" id="CHEBI:456216"/>
        <dbReference type="EC" id="7.2.2.13"/>
    </reaction>
</comment>
<comment type="subunit">
    <text evidence="3">The sodium/potassium-transporting ATPase is composed of a catalytic alpha subunit, an auxiliary non-catalytic beta subunit and an additional regulatory subunit.</text>
</comment>
<comment type="subcellular location">
    <subcellularLocation>
        <location evidence="3">Cell membrane</location>
        <topology>Multi-pass membrane protein</topology>
    </subcellularLocation>
</comment>
<comment type="similarity">
    <text evidence="3">Belongs to the cation transport ATPase (P-type) (TC 3.A.3) family. Type IIC subfamily.</text>
</comment>
<dbReference type="EC" id="7.2.2.13"/>
<dbReference type="EMBL" id="Y07513">
    <property type="protein sequence ID" value="CAA68811.1"/>
    <property type="molecule type" value="mRNA"/>
</dbReference>
<dbReference type="PIR" id="S06635">
    <property type="entry name" value="S06635"/>
</dbReference>
<dbReference type="PDB" id="8K1L">
    <property type="method" value="EM"/>
    <property type="resolution" value="3.44 A"/>
    <property type="chains" value="A=1-996"/>
</dbReference>
<dbReference type="PDBsum" id="8K1L"/>
<dbReference type="SMR" id="P17326"/>
<dbReference type="GO" id="GO:0005886">
    <property type="term" value="C:plasma membrane"/>
    <property type="evidence" value="ECO:0007669"/>
    <property type="project" value="UniProtKB-SubCell"/>
</dbReference>
<dbReference type="GO" id="GO:0005524">
    <property type="term" value="F:ATP binding"/>
    <property type="evidence" value="ECO:0007669"/>
    <property type="project" value="UniProtKB-KW"/>
</dbReference>
<dbReference type="GO" id="GO:0016887">
    <property type="term" value="F:ATP hydrolysis activity"/>
    <property type="evidence" value="ECO:0007669"/>
    <property type="project" value="InterPro"/>
</dbReference>
<dbReference type="GO" id="GO:0046872">
    <property type="term" value="F:metal ion binding"/>
    <property type="evidence" value="ECO:0007669"/>
    <property type="project" value="UniProtKB-KW"/>
</dbReference>
<dbReference type="GO" id="GO:0005391">
    <property type="term" value="F:P-type sodium:potassium-exchanging transporter activity"/>
    <property type="evidence" value="ECO:0007669"/>
    <property type="project" value="UniProtKB-EC"/>
</dbReference>
<dbReference type="GO" id="GO:0030007">
    <property type="term" value="P:intracellular potassium ion homeostasis"/>
    <property type="evidence" value="ECO:0007669"/>
    <property type="project" value="TreeGrafter"/>
</dbReference>
<dbReference type="GO" id="GO:0006883">
    <property type="term" value="P:intracellular sodium ion homeostasis"/>
    <property type="evidence" value="ECO:0007669"/>
    <property type="project" value="TreeGrafter"/>
</dbReference>
<dbReference type="GO" id="GO:1990573">
    <property type="term" value="P:potassium ion import across plasma membrane"/>
    <property type="evidence" value="ECO:0007669"/>
    <property type="project" value="TreeGrafter"/>
</dbReference>
<dbReference type="GO" id="GO:1902600">
    <property type="term" value="P:proton transmembrane transport"/>
    <property type="evidence" value="ECO:0007669"/>
    <property type="project" value="TreeGrafter"/>
</dbReference>
<dbReference type="GO" id="GO:0036376">
    <property type="term" value="P:sodium ion export across plasma membrane"/>
    <property type="evidence" value="ECO:0007669"/>
    <property type="project" value="TreeGrafter"/>
</dbReference>
<dbReference type="CDD" id="cd02608">
    <property type="entry name" value="P-type_ATPase_Na-K_like"/>
    <property type="match status" value="1"/>
</dbReference>
<dbReference type="FunFam" id="1.20.1110.10:FF:000038">
    <property type="entry name" value="Sodium/potassium-transporting ATPase subunit alpha"/>
    <property type="match status" value="1"/>
</dbReference>
<dbReference type="FunFam" id="2.70.150.10:FF:000003">
    <property type="entry name" value="Sodium/potassium-transporting ATPase subunit alpha"/>
    <property type="match status" value="1"/>
</dbReference>
<dbReference type="FunFam" id="3.40.1110.10:FF:000001">
    <property type="entry name" value="Sodium/potassium-transporting ATPase subunit alpha"/>
    <property type="match status" value="1"/>
</dbReference>
<dbReference type="FunFam" id="3.40.50.1000:FF:000004">
    <property type="entry name" value="Sodium/potassium-transporting ATPase subunit alpha"/>
    <property type="match status" value="1"/>
</dbReference>
<dbReference type="FunFam" id="1.20.1110.10:FF:000095">
    <property type="entry name" value="Sodium/potassium-transporting ATPase subunit alpha-1"/>
    <property type="match status" value="1"/>
</dbReference>
<dbReference type="Gene3D" id="3.40.1110.10">
    <property type="entry name" value="Calcium-transporting ATPase, cytoplasmic domain N"/>
    <property type="match status" value="1"/>
</dbReference>
<dbReference type="Gene3D" id="2.70.150.10">
    <property type="entry name" value="Calcium-transporting ATPase, cytoplasmic transduction domain A"/>
    <property type="match status" value="1"/>
</dbReference>
<dbReference type="Gene3D" id="1.20.1110.10">
    <property type="entry name" value="Calcium-transporting ATPase, transmembrane domain"/>
    <property type="match status" value="1"/>
</dbReference>
<dbReference type="Gene3D" id="3.40.50.1000">
    <property type="entry name" value="HAD superfamily/HAD-like"/>
    <property type="match status" value="1"/>
</dbReference>
<dbReference type="InterPro" id="IPR006068">
    <property type="entry name" value="ATPase_P-typ_cation-transptr_C"/>
</dbReference>
<dbReference type="InterPro" id="IPR004014">
    <property type="entry name" value="ATPase_P-typ_cation-transptr_N"/>
</dbReference>
<dbReference type="InterPro" id="IPR023299">
    <property type="entry name" value="ATPase_P-typ_cyto_dom_N"/>
</dbReference>
<dbReference type="InterPro" id="IPR018303">
    <property type="entry name" value="ATPase_P-typ_P_site"/>
</dbReference>
<dbReference type="InterPro" id="IPR023298">
    <property type="entry name" value="ATPase_P-typ_TM_dom_sf"/>
</dbReference>
<dbReference type="InterPro" id="IPR008250">
    <property type="entry name" value="ATPase_P-typ_transduc_dom_A_sf"/>
</dbReference>
<dbReference type="InterPro" id="IPR050510">
    <property type="entry name" value="Cation_transp_ATPase_P-type"/>
</dbReference>
<dbReference type="InterPro" id="IPR036412">
    <property type="entry name" value="HAD-like_sf"/>
</dbReference>
<dbReference type="InterPro" id="IPR023214">
    <property type="entry name" value="HAD_sf"/>
</dbReference>
<dbReference type="InterPro" id="IPR005775">
    <property type="entry name" value="P-type_ATPase_IIC"/>
</dbReference>
<dbReference type="InterPro" id="IPR001757">
    <property type="entry name" value="P_typ_ATPase"/>
</dbReference>
<dbReference type="InterPro" id="IPR044492">
    <property type="entry name" value="P_typ_ATPase_HD_dom"/>
</dbReference>
<dbReference type="NCBIfam" id="TIGR01106">
    <property type="entry name" value="ATPase-IIC_X-K"/>
    <property type="match status" value="1"/>
</dbReference>
<dbReference type="NCBIfam" id="TIGR01494">
    <property type="entry name" value="ATPase_P-type"/>
    <property type="match status" value="2"/>
</dbReference>
<dbReference type="PANTHER" id="PTHR43294">
    <property type="entry name" value="SODIUM/POTASSIUM-TRANSPORTING ATPASE SUBUNIT ALPHA"/>
    <property type="match status" value="1"/>
</dbReference>
<dbReference type="PANTHER" id="PTHR43294:SF13">
    <property type="entry name" value="SODIUM_POTASSIUM-TRANSPORTING ATPASE SUBUNIT ALPHA"/>
    <property type="match status" value="1"/>
</dbReference>
<dbReference type="Pfam" id="PF13246">
    <property type="entry name" value="Cation_ATPase"/>
    <property type="match status" value="1"/>
</dbReference>
<dbReference type="Pfam" id="PF00689">
    <property type="entry name" value="Cation_ATPase_C"/>
    <property type="match status" value="1"/>
</dbReference>
<dbReference type="Pfam" id="PF00690">
    <property type="entry name" value="Cation_ATPase_N"/>
    <property type="match status" value="1"/>
</dbReference>
<dbReference type="Pfam" id="PF00122">
    <property type="entry name" value="E1-E2_ATPase"/>
    <property type="match status" value="1"/>
</dbReference>
<dbReference type="Pfam" id="PF00702">
    <property type="entry name" value="Hydrolase"/>
    <property type="match status" value="1"/>
</dbReference>
<dbReference type="PRINTS" id="PR00119">
    <property type="entry name" value="CATATPASE"/>
</dbReference>
<dbReference type="PRINTS" id="PR00121">
    <property type="entry name" value="NAKATPASE"/>
</dbReference>
<dbReference type="SFLD" id="SFLDS00003">
    <property type="entry name" value="Haloacid_Dehalogenase"/>
    <property type="match status" value="1"/>
</dbReference>
<dbReference type="SFLD" id="SFLDF00027">
    <property type="entry name" value="p-type_atpase"/>
    <property type="match status" value="1"/>
</dbReference>
<dbReference type="SMART" id="SM00831">
    <property type="entry name" value="Cation_ATPase_N"/>
    <property type="match status" value="1"/>
</dbReference>
<dbReference type="SUPFAM" id="SSF81653">
    <property type="entry name" value="Calcium ATPase, transduction domain A"/>
    <property type="match status" value="1"/>
</dbReference>
<dbReference type="SUPFAM" id="SSF81665">
    <property type="entry name" value="Calcium ATPase, transmembrane domain M"/>
    <property type="match status" value="1"/>
</dbReference>
<dbReference type="SUPFAM" id="SSF56784">
    <property type="entry name" value="HAD-like"/>
    <property type="match status" value="1"/>
</dbReference>
<dbReference type="SUPFAM" id="SSF81660">
    <property type="entry name" value="Metal cation-transporting ATPase, ATP-binding domain N"/>
    <property type="match status" value="1"/>
</dbReference>
<dbReference type="PROSITE" id="PS00154">
    <property type="entry name" value="ATPASE_E1_E2"/>
    <property type="match status" value="1"/>
</dbReference>
<protein>
    <recommendedName>
        <fullName>Sodium/potassium-transporting ATPase subunit alpha-A</fullName>
        <shortName>Na(+)/K(+) ATPase alpha-A subunit</shortName>
        <ecNumber>7.2.2.13</ecNumber>
    </recommendedName>
    <alternativeName>
        <fullName>Sodium pump subunit alpha-A</fullName>
    </alternativeName>
</protein>
<organism>
    <name type="scientific">Artemia franciscana</name>
    <name type="common">Brine shrimp</name>
    <name type="synonym">Artemia sanfranciscana</name>
    <dbReference type="NCBI Taxonomy" id="6661"/>
    <lineage>
        <taxon>Eukaryota</taxon>
        <taxon>Metazoa</taxon>
        <taxon>Ecdysozoa</taxon>
        <taxon>Arthropoda</taxon>
        <taxon>Crustacea</taxon>
        <taxon>Branchiopoda</taxon>
        <taxon>Anostraca</taxon>
        <taxon>Artemiidae</taxon>
        <taxon>Artemia</taxon>
    </lineage>
</organism>